<organism>
    <name type="scientific">Human papillomavirus 51</name>
    <dbReference type="NCBI Taxonomy" id="10595"/>
    <lineage>
        <taxon>Viruses</taxon>
        <taxon>Monodnaviria</taxon>
        <taxon>Shotokuvirae</taxon>
        <taxon>Cossaviricota</taxon>
        <taxon>Papovaviricetes</taxon>
        <taxon>Zurhausenvirales</taxon>
        <taxon>Papillomaviridae</taxon>
        <taxon>Firstpapillomavirinae</taxon>
        <taxon>Alphapapillomavirus</taxon>
        <taxon>Alphapapillomavirus 5</taxon>
    </lineage>
</organism>
<feature type="chain" id="PRO_0000133368" description="Protein E6">
    <location>
        <begin position="1"/>
        <end position="151"/>
    </location>
</feature>
<feature type="zinc finger region" evidence="1">
    <location>
        <begin position="30"/>
        <end position="66"/>
    </location>
</feature>
<feature type="zinc finger region" evidence="1">
    <location>
        <begin position="103"/>
        <end position="139"/>
    </location>
</feature>
<feature type="short sequence motif" description="PDZ-binding domain" evidence="1">
    <location>
        <begin position="149"/>
        <end position="151"/>
    </location>
</feature>
<feature type="strand" evidence="3">
    <location>
        <begin position="81"/>
        <end position="83"/>
    </location>
</feature>
<feature type="helix" evidence="3">
    <location>
        <begin position="85"/>
        <end position="91"/>
    </location>
</feature>
<feature type="turn" evidence="3">
    <location>
        <begin position="96"/>
        <end position="98"/>
    </location>
</feature>
<feature type="turn" evidence="3">
    <location>
        <begin position="104"/>
        <end position="106"/>
    </location>
</feature>
<feature type="helix" evidence="3">
    <location>
        <begin position="112"/>
        <end position="120"/>
    </location>
</feature>
<feature type="strand" evidence="3">
    <location>
        <begin position="125"/>
        <end position="128"/>
    </location>
</feature>
<feature type="strand" evidence="3">
    <location>
        <begin position="131"/>
        <end position="134"/>
    </location>
</feature>
<feature type="helix" evidence="3">
    <location>
        <begin position="137"/>
        <end position="143"/>
    </location>
</feature>
<feature type="strand" evidence="3">
    <location>
        <begin position="145"/>
        <end position="147"/>
    </location>
</feature>
<reference key="1">
    <citation type="journal article" date="1991" name="J. Virol.">
        <title>Biologic properties and nucleotide sequence analysis of human papillomavirus type 51.</title>
        <authorList>
            <person name="Lungu O."/>
            <person name="Crum C.P."/>
            <person name="Silverstein S.J."/>
        </authorList>
    </citation>
    <scope>NUCLEOTIDE SEQUENCE [GENOMIC DNA]</scope>
</reference>
<name>VE6_HPV51</name>
<evidence type="ECO:0000255" key="1">
    <source>
        <dbReference type="HAMAP-Rule" id="MF_04006"/>
    </source>
</evidence>
<evidence type="ECO:0000305" key="2"/>
<evidence type="ECO:0007829" key="3">
    <source>
        <dbReference type="PDB" id="2M3L"/>
    </source>
</evidence>
<comment type="function">
    <text evidence="1">Plays a major role in the induction and maintenance of cellular transformation. Acts mainly as an oncoprotein by stimulating the destruction of many host cell key regulatory proteins. E6 associates with host UBE3A/E6-AP ubiquitin-protein ligase, and inactivates tumor suppressors TP53 and TP73 by targeting them to the 26S proteasome for degradation. In turn, DNA damage and chromosomal instabilities increase and lead to cell proliferation and cancer development. The complex E6/E6AP targets several other substrates to degradation via the proteasome including host DLG1 or NFX1, a repressor of human telomerase reverse transcriptase (hTERT). The resulting increased expression of hTERT prevents the shortening of telomere length leading to cell immortalization. Other cellular targets including BAK1, Fas-associated death domain-containing protein (FADD) and procaspase 8, are degraded by E6/E6AP causing inhibition of apoptosis. E6 also inhibits immune response by interacting with host IRF3 and TYK2. These interactions prevent IRF3 transcriptional activities and inhibit TYK2-mediated JAK-STAT activation by interferon alpha resulting in inhibition of the interferon signaling pathway.</text>
</comment>
<comment type="subunit">
    <text evidence="1">Forms homodimers. Interacts with ubiquitin-protein ligase UBE3A/E6-AP and thus forms a complex with human TP53. Interacts with human NFX1 and MAGI3. Interacts with human IRF3; this interaction inhibits the establishment of antiviral state. Interacts with human TYK2; this interaction inhibits JAK-STAT activation by interferon alpha. Interacts with host DLG1; this interaction leads to the proteasomal degradation of DLG1.</text>
</comment>
<comment type="subcellular location">
    <subcellularLocation>
        <location evidence="1">Host cytoplasm</location>
    </subcellularLocation>
    <subcellularLocation>
        <location evidence="1">Host nucleus</location>
    </subcellularLocation>
</comment>
<comment type="miscellaneous">
    <text evidence="1">Belongs to the high risk human alphapapillomavirus family. The cancer-causing human papillomavirus E6 protein has a unique carboxy terminal PDZ domain containing substrate.</text>
</comment>
<comment type="similarity">
    <text evidence="2">Belongs to the papillomaviridae E6 protein family.</text>
</comment>
<keyword id="KW-0002">3D-structure</keyword>
<keyword id="KW-0010">Activator</keyword>
<keyword id="KW-0238">DNA-binding</keyword>
<keyword id="KW-0244">Early protein</keyword>
<keyword id="KW-1035">Host cytoplasm</keyword>
<keyword id="KW-1048">Host nucleus</keyword>
<keyword id="KW-0945">Host-virus interaction</keyword>
<keyword id="KW-1090">Inhibition of host innate immune response by virus</keyword>
<keyword id="KW-1092">Inhibition of host IRF3 by virus</keyword>
<keyword id="KW-1113">Inhibition of host RLR pathway by virus</keyword>
<keyword id="KW-0479">Metal-binding</keyword>
<keyword id="KW-1119">Modulation of host cell apoptosis by virus</keyword>
<keyword id="KW-0553">Oncogene</keyword>
<keyword id="KW-0804">Transcription</keyword>
<keyword id="KW-0805">Transcription regulation</keyword>
<keyword id="KW-0899">Viral immunoevasion</keyword>
<keyword id="KW-0862">Zinc</keyword>
<keyword id="KW-0863">Zinc-finger</keyword>
<organismHost>
    <name type="scientific">Homo sapiens</name>
    <name type="common">Human</name>
    <dbReference type="NCBI Taxonomy" id="9606"/>
</organismHost>
<sequence>MFEDKRERPRTLHELCEALNVSMHNIQVVCVYCKKELCRADVYNVAFTEIKIVYRDNNPYAVCKQCLLFYSKIREYRRYSRSVYGTTLEAITKKSLYDLSIRCHRCQRPLGPEEKQKLVDEKKRFHEIAGRWTGQCANCWQRTRQRNETQV</sequence>
<gene>
    <name evidence="1" type="primary">E6</name>
</gene>
<protein>
    <recommendedName>
        <fullName evidence="1">Protein E6</fullName>
    </recommendedName>
</protein>
<accession>P26554</accession>
<dbReference type="EMBL" id="M62877">
    <property type="status" value="NOT_ANNOTATED_CDS"/>
    <property type="molecule type" value="Genomic_DNA"/>
</dbReference>
<dbReference type="PIR" id="E40415">
    <property type="entry name" value="W6WL51"/>
</dbReference>
<dbReference type="PDB" id="2M3L">
    <property type="method" value="NMR"/>
    <property type="chains" value="A=80-151"/>
</dbReference>
<dbReference type="PDB" id="2M3M">
    <property type="method" value="NMR"/>
    <property type="chains" value="B=142-151"/>
</dbReference>
<dbReference type="PDBsum" id="2M3L"/>
<dbReference type="PDBsum" id="2M3M"/>
<dbReference type="BMRB" id="P26554"/>
<dbReference type="SMR" id="P26554"/>
<dbReference type="IntAct" id="P26554">
    <property type="interactions" value="1"/>
</dbReference>
<dbReference type="MINT" id="P26554"/>
<dbReference type="EvolutionaryTrace" id="P26554"/>
<dbReference type="Proteomes" id="UP000009125">
    <property type="component" value="Segment"/>
</dbReference>
<dbReference type="GO" id="GO:0030430">
    <property type="term" value="C:host cell cytoplasm"/>
    <property type="evidence" value="ECO:0007669"/>
    <property type="project" value="UniProtKB-SubCell"/>
</dbReference>
<dbReference type="GO" id="GO:0042025">
    <property type="term" value="C:host cell nucleus"/>
    <property type="evidence" value="ECO:0007669"/>
    <property type="project" value="UniProtKB-SubCell"/>
</dbReference>
<dbReference type="GO" id="GO:0003677">
    <property type="term" value="F:DNA binding"/>
    <property type="evidence" value="ECO:0007669"/>
    <property type="project" value="UniProtKB-UniRule"/>
</dbReference>
<dbReference type="GO" id="GO:0030165">
    <property type="term" value="F:PDZ domain binding"/>
    <property type="evidence" value="ECO:0007669"/>
    <property type="project" value="UniProtKB-UniRule"/>
</dbReference>
<dbReference type="GO" id="GO:0008270">
    <property type="term" value="F:zinc ion binding"/>
    <property type="evidence" value="ECO:0007669"/>
    <property type="project" value="UniProtKB-KW"/>
</dbReference>
<dbReference type="GO" id="GO:0006351">
    <property type="term" value="P:DNA-templated transcription"/>
    <property type="evidence" value="ECO:0007669"/>
    <property type="project" value="UniProtKB-UniRule"/>
</dbReference>
<dbReference type="GO" id="GO:0006355">
    <property type="term" value="P:regulation of DNA-templated transcription"/>
    <property type="evidence" value="ECO:0007669"/>
    <property type="project" value="UniProtKB-UniRule"/>
</dbReference>
<dbReference type="GO" id="GO:0030162">
    <property type="term" value="P:regulation of proteolysis"/>
    <property type="evidence" value="ECO:0000269"/>
    <property type="project" value="DisProt"/>
</dbReference>
<dbReference type="GO" id="GO:0052150">
    <property type="term" value="P:symbiont-mediated perturbation of host apoptosis"/>
    <property type="evidence" value="ECO:0007669"/>
    <property type="project" value="UniProtKB-KW"/>
</dbReference>
<dbReference type="GO" id="GO:0039648">
    <property type="term" value="P:symbiont-mediated perturbation of host ubiquitin-like protein modification"/>
    <property type="evidence" value="ECO:0007669"/>
    <property type="project" value="UniProtKB-UniRule"/>
</dbReference>
<dbReference type="GO" id="GO:0039548">
    <property type="term" value="P:symbiont-mediated suppression of host cytoplasmic pattern recognition receptor signaling pathway via inhibition of IRF3 activity"/>
    <property type="evidence" value="ECO:0007669"/>
    <property type="project" value="UniProtKB-UniRule"/>
</dbReference>
<dbReference type="GO" id="GO:0039502">
    <property type="term" value="P:symbiont-mediated suppression of host type I interferon-mediated signaling pathway"/>
    <property type="evidence" value="ECO:0007669"/>
    <property type="project" value="UniProtKB-UniRule"/>
</dbReference>
<dbReference type="DisProt" id="DP02256"/>
<dbReference type="FunFam" id="3.30.240.40:FF:000001">
    <property type="entry name" value="Protein E6"/>
    <property type="match status" value="1"/>
</dbReference>
<dbReference type="FunFam" id="3.30.240.40:FF:000002">
    <property type="entry name" value="Protein E6"/>
    <property type="match status" value="1"/>
</dbReference>
<dbReference type="Gene3D" id="3.30.240.40">
    <property type="entry name" value="E6 early regulatory protein"/>
    <property type="match status" value="2"/>
</dbReference>
<dbReference type="HAMAP" id="MF_04006">
    <property type="entry name" value="HPV_E6"/>
    <property type="match status" value="1"/>
</dbReference>
<dbReference type="IDEAL" id="IID90014"/>
<dbReference type="InterPro" id="IPR001334">
    <property type="entry name" value="E6"/>
</dbReference>
<dbReference type="InterPro" id="IPR038575">
    <property type="entry name" value="E6_sf"/>
</dbReference>
<dbReference type="Pfam" id="PF00518">
    <property type="entry name" value="E6"/>
    <property type="match status" value="1"/>
</dbReference>
<dbReference type="SUPFAM" id="SSF161229">
    <property type="entry name" value="E6 C-terminal domain-like"/>
    <property type="match status" value="2"/>
</dbReference>
<proteinExistence type="evidence at protein level"/>